<gene>
    <name evidence="1" type="primary">tsaD</name>
    <name type="synonym">gcp</name>
    <name type="ordered locus">BPP3059</name>
</gene>
<protein>
    <recommendedName>
        <fullName evidence="1">tRNA N6-adenosine threonylcarbamoyltransferase</fullName>
        <ecNumber evidence="1">2.3.1.234</ecNumber>
    </recommendedName>
    <alternativeName>
        <fullName evidence="1">N6-L-threonylcarbamoyladenine synthase</fullName>
        <shortName evidence="1">t(6)A synthase</shortName>
    </alternativeName>
    <alternativeName>
        <fullName evidence="1">t(6)A37 threonylcarbamoyladenosine biosynthesis protein TsaD</fullName>
    </alternativeName>
    <alternativeName>
        <fullName evidence="1">tRNA threonylcarbamoyladenosine biosynthesis protein TsaD</fullName>
    </alternativeName>
</protein>
<feature type="chain" id="PRO_0000303286" description="tRNA N6-adenosine threonylcarbamoyltransferase">
    <location>
        <begin position="1"/>
        <end position="346"/>
    </location>
</feature>
<feature type="binding site" evidence="1">
    <location>
        <position position="111"/>
    </location>
    <ligand>
        <name>Fe cation</name>
        <dbReference type="ChEBI" id="CHEBI:24875"/>
    </ligand>
</feature>
<feature type="binding site" evidence="1">
    <location>
        <position position="115"/>
    </location>
    <ligand>
        <name>Fe cation</name>
        <dbReference type="ChEBI" id="CHEBI:24875"/>
    </ligand>
</feature>
<feature type="binding site" evidence="1">
    <location>
        <begin position="134"/>
        <end position="138"/>
    </location>
    <ligand>
        <name>substrate</name>
    </ligand>
</feature>
<feature type="binding site" evidence="1">
    <location>
        <position position="167"/>
    </location>
    <ligand>
        <name>substrate</name>
    </ligand>
</feature>
<feature type="binding site" evidence="1">
    <location>
        <position position="180"/>
    </location>
    <ligand>
        <name>substrate</name>
    </ligand>
</feature>
<feature type="binding site" evidence="1">
    <location>
        <position position="277"/>
    </location>
    <ligand>
        <name>substrate</name>
    </ligand>
</feature>
<feature type="binding site" evidence="1">
    <location>
        <position position="305"/>
    </location>
    <ligand>
        <name>Fe cation</name>
        <dbReference type="ChEBI" id="CHEBI:24875"/>
    </ligand>
</feature>
<evidence type="ECO:0000255" key="1">
    <source>
        <dbReference type="HAMAP-Rule" id="MF_01445"/>
    </source>
</evidence>
<proteinExistence type="inferred from homology"/>
<organism>
    <name type="scientific">Bordetella parapertussis (strain 12822 / ATCC BAA-587 / NCTC 13253)</name>
    <dbReference type="NCBI Taxonomy" id="257311"/>
    <lineage>
        <taxon>Bacteria</taxon>
        <taxon>Pseudomonadati</taxon>
        <taxon>Pseudomonadota</taxon>
        <taxon>Betaproteobacteria</taxon>
        <taxon>Burkholderiales</taxon>
        <taxon>Alcaligenaceae</taxon>
        <taxon>Bordetella</taxon>
    </lineage>
</organism>
<comment type="function">
    <text evidence="1">Required for the formation of a threonylcarbamoyl group on adenosine at position 37 (t(6)A37) in tRNAs that read codons beginning with adenine. Is involved in the transfer of the threonylcarbamoyl moiety of threonylcarbamoyl-AMP (TC-AMP) to the N6 group of A37, together with TsaE and TsaB. TsaD likely plays a direct catalytic role in this reaction.</text>
</comment>
<comment type="catalytic activity">
    <reaction evidence="1">
        <text>L-threonylcarbamoyladenylate + adenosine(37) in tRNA = N(6)-L-threonylcarbamoyladenosine(37) in tRNA + AMP + H(+)</text>
        <dbReference type="Rhea" id="RHEA:37059"/>
        <dbReference type="Rhea" id="RHEA-COMP:10162"/>
        <dbReference type="Rhea" id="RHEA-COMP:10163"/>
        <dbReference type="ChEBI" id="CHEBI:15378"/>
        <dbReference type="ChEBI" id="CHEBI:73682"/>
        <dbReference type="ChEBI" id="CHEBI:74411"/>
        <dbReference type="ChEBI" id="CHEBI:74418"/>
        <dbReference type="ChEBI" id="CHEBI:456215"/>
        <dbReference type="EC" id="2.3.1.234"/>
    </reaction>
</comment>
<comment type="cofactor">
    <cofactor evidence="1">
        <name>Fe(2+)</name>
        <dbReference type="ChEBI" id="CHEBI:29033"/>
    </cofactor>
    <text evidence="1">Binds 1 Fe(2+) ion per subunit.</text>
</comment>
<comment type="subcellular location">
    <subcellularLocation>
        <location evidence="1">Cytoplasm</location>
    </subcellularLocation>
</comment>
<comment type="similarity">
    <text evidence="1">Belongs to the KAE1 / TsaD family.</text>
</comment>
<name>TSAD_BORPA</name>
<keyword id="KW-0012">Acyltransferase</keyword>
<keyword id="KW-0963">Cytoplasm</keyword>
<keyword id="KW-0408">Iron</keyword>
<keyword id="KW-0479">Metal-binding</keyword>
<keyword id="KW-0808">Transferase</keyword>
<keyword id="KW-0819">tRNA processing</keyword>
<accession>Q7W668</accession>
<sequence>MIILGFESSCDETGVAAVCTERGLLAHALHTQIAMHQEYGGVVPELASRDHIRRVVPLTRQVLAEAGLTLADVGAVAYTAGPGLAGALLVGASVAQALAWSRALPAIGIHHLEGHLLSPLLAEPRPEFPFVALLVSGGHTQLMRVDGVGRYELLGETLDDAAGEAFDKSAKLMGLGYPGGSALARLAEQGDASRYDLPRPMLHSGDLDFSFSGLKTAVLTRVKAATRDGGELGEQDRADLAAATQAAIVEVLAAKAIRALKQTGLRRLVVAGGVGANALLRAHLARALKPLRAEAYFPPLSLCTDNGAMIAFAAAERVKAGLADLREGDHAFTVRPRWDLADIQAG</sequence>
<dbReference type="EC" id="2.3.1.234" evidence="1"/>
<dbReference type="EMBL" id="BX640432">
    <property type="protein sequence ID" value="CAE38346.1"/>
    <property type="molecule type" value="Genomic_DNA"/>
</dbReference>
<dbReference type="RefSeq" id="WP_010928875.1">
    <property type="nucleotide sequence ID" value="NC_002928.3"/>
</dbReference>
<dbReference type="SMR" id="Q7W668"/>
<dbReference type="GeneID" id="93204841"/>
<dbReference type="KEGG" id="bpa:BPP3059"/>
<dbReference type="HOGENOM" id="CLU_023208_0_2_4"/>
<dbReference type="Proteomes" id="UP000001421">
    <property type="component" value="Chromosome"/>
</dbReference>
<dbReference type="GO" id="GO:0005737">
    <property type="term" value="C:cytoplasm"/>
    <property type="evidence" value="ECO:0007669"/>
    <property type="project" value="UniProtKB-SubCell"/>
</dbReference>
<dbReference type="GO" id="GO:0005506">
    <property type="term" value="F:iron ion binding"/>
    <property type="evidence" value="ECO:0007669"/>
    <property type="project" value="UniProtKB-UniRule"/>
</dbReference>
<dbReference type="GO" id="GO:0061711">
    <property type="term" value="F:N(6)-L-threonylcarbamoyladenine synthase activity"/>
    <property type="evidence" value="ECO:0007669"/>
    <property type="project" value="UniProtKB-EC"/>
</dbReference>
<dbReference type="GO" id="GO:0002949">
    <property type="term" value="P:tRNA threonylcarbamoyladenosine modification"/>
    <property type="evidence" value="ECO:0007669"/>
    <property type="project" value="UniProtKB-UniRule"/>
</dbReference>
<dbReference type="CDD" id="cd24133">
    <property type="entry name" value="ASKHA_NBD_TsaD_bac"/>
    <property type="match status" value="1"/>
</dbReference>
<dbReference type="FunFam" id="3.30.420.40:FF:000012">
    <property type="entry name" value="tRNA N6-adenosine threonylcarbamoyltransferase"/>
    <property type="match status" value="1"/>
</dbReference>
<dbReference type="FunFam" id="3.30.420.40:FF:000040">
    <property type="entry name" value="tRNA N6-adenosine threonylcarbamoyltransferase"/>
    <property type="match status" value="1"/>
</dbReference>
<dbReference type="Gene3D" id="3.30.420.40">
    <property type="match status" value="2"/>
</dbReference>
<dbReference type="HAMAP" id="MF_01445">
    <property type="entry name" value="TsaD"/>
    <property type="match status" value="1"/>
</dbReference>
<dbReference type="InterPro" id="IPR043129">
    <property type="entry name" value="ATPase_NBD"/>
</dbReference>
<dbReference type="InterPro" id="IPR000905">
    <property type="entry name" value="Gcp-like_dom"/>
</dbReference>
<dbReference type="InterPro" id="IPR017861">
    <property type="entry name" value="KAE1/TsaD"/>
</dbReference>
<dbReference type="InterPro" id="IPR022450">
    <property type="entry name" value="TsaD"/>
</dbReference>
<dbReference type="NCBIfam" id="TIGR00329">
    <property type="entry name" value="gcp_kae1"/>
    <property type="match status" value="1"/>
</dbReference>
<dbReference type="NCBIfam" id="TIGR03723">
    <property type="entry name" value="T6A_TsaD_YgjD"/>
    <property type="match status" value="1"/>
</dbReference>
<dbReference type="PANTHER" id="PTHR11735">
    <property type="entry name" value="TRNA N6-ADENOSINE THREONYLCARBAMOYLTRANSFERASE"/>
    <property type="match status" value="1"/>
</dbReference>
<dbReference type="PANTHER" id="PTHR11735:SF6">
    <property type="entry name" value="TRNA N6-ADENOSINE THREONYLCARBAMOYLTRANSFERASE, MITOCHONDRIAL"/>
    <property type="match status" value="1"/>
</dbReference>
<dbReference type="Pfam" id="PF00814">
    <property type="entry name" value="TsaD"/>
    <property type="match status" value="1"/>
</dbReference>
<dbReference type="PRINTS" id="PR00789">
    <property type="entry name" value="OSIALOPTASE"/>
</dbReference>
<dbReference type="SUPFAM" id="SSF53067">
    <property type="entry name" value="Actin-like ATPase domain"/>
    <property type="match status" value="2"/>
</dbReference>
<reference key="1">
    <citation type="journal article" date="2003" name="Nat. Genet.">
        <title>Comparative analysis of the genome sequences of Bordetella pertussis, Bordetella parapertussis and Bordetella bronchiseptica.</title>
        <authorList>
            <person name="Parkhill J."/>
            <person name="Sebaihia M."/>
            <person name="Preston A."/>
            <person name="Murphy L.D."/>
            <person name="Thomson N.R."/>
            <person name="Harris D.E."/>
            <person name="Holden M.T.G."/>
            <person name="Churcher C.M."/>
            <person name="Bentley S.D."/>
            <person name="Mungall K.L."/>
            <person name="Cerdeno-Tarraga A.-M."/>
            <person name="Temple L."/>
            <person name="James K.D."/>
            <person name="Harris B."/>
            <person name="Quail M.A."/>
            <person name="Achtman M."/>
            <person name="Atkin R."/>
            <person name="Baker S."/>
            <person name="Basham D."/>
            <person name="Bason N."/>
            <person name="Cherevach I."/>
            <person name="Chillingworth T."/>
            <person name="Collins M."/>
            <person name="Cronin A."/>
            <person name="Davis P."/>
            <person name="Doggett J."/>
            <person name="Feltwell T."/>
            <person name="Goble A."/>
            <person name="Hamlin N."/>
            <person name="Hauser H."/>
            <person name="Holroyd S."/>
            <person name="Jagels K."/>
            <person name="Leather S."/>
            <person name="Moule S."/>
            <person name="Norberczak H."/>
            <person name="O'Neil S."/>
            <person name="Ormond D."/>
            <person name="Price C."/>
            <person name="Rabbinowitsch E."/>
            <person name="Rutter S."/>
            <person name="Sanders M."/>
            <person name="Saunders D."/>
            <person name="Seeger K."/>
            <person name="Sharp S."/>
            <person name="Simmonds M."/>
            <person name="Skelton J."/>
            <person name="Squares R."/>
            <person name="Squares S."/>
            <person name="Stevens K."/>
            <person name="Unwin L."/>
            <person name="Whitehead S."/>
            <person name="Barrell B.G."/>
            <person name="Maskell D.J."/>
        </authorList>
    </citation>
    <scope>NUCLEOTIDE SEQUENCE [LARGE SCALE GENOMIC DNA]</scope>
    <source>
        <strain>12822 / ATCC BAA-587 / NCTC 13253</strain>
    </source>
</reference>